<dbReference type="EMBL" id="CU207211">
    <property type="protein sequence ID" value="CAL61250.1"/>
    <property type="molecule type" value="Genomic_DNA"/>
</dbReference>
<dbReference type="SMR" id="A4G413"/>
<dbReference type="STRING" id="204773.HEAR1071"/>
<dbReference type="KEGG" id="har:HEAR1071"/>
<dbReference type="eggNOG" id="COG0851">
    <property type="taxonomic scope" value="Bacteria"/>
</dbReference>
<dbReference type="HOGENOM" id="CLU_137929_2_1_4"/>
<dbReference type="OrthoDB" id="9802655at2"/>
<dbReference type="Proteomes" id="UP000006697">
    <property type="component" value="Chromosome"/>
</dbReference>
<dbReference type="GO" id="GO:0051301">
    <property type="term" value="P:cell division"/>
    <property type="evidence" value="ECO:0007669"/>
    <property type="project" value="UniProtKB-KW"/>
</dbReference>
<dbReference type="GO" id="GO:0032955">
    <property type="term" value="P:regulation of division septum assembly"/>
    <property type="evidence" value="ECO:0007669"/>
    <property type="project" value="InterPro"/>
</dbReference>
<dbReference type="FunFam" id="3.30.1070.10:FF:000001">
    <property type="entry name" value="Cell division topological specificity factor"/>
    <property type="match status" value="1"/>
</dbReference>
<dbReference type="Gene3D" id="3.30.1070.10">
    <property type="entry name" value="Cell division topological specificity factor MinE"/>
    <property type="match status" value="1"/>
</dbReference>
<dbReference type="HAMAP" id="MF_00262">
    <property type="entry name" value="MinE"/>
    <property type="match status" value="1"/>
</dbReference>
<dbReference type="InterPro" id="IPR005527">
    <property type="entry name" value="MinE"/>
</dbReference>
<dbReference type="InterPro" id="IPR036707">
    <property type="entry name" value="MinE_sf"/>
</dbReference>
<dbReference type="NCBIfam" id="TIGR01215">
    <property type="entry name" value="minE"/>
    <property type="match status" value="1"/>
</dbReference>
<dbReference type="NCBIfam" id="NF001422">
    <property type="entry name" value="PRK00296.1"/>
    <property type="match status" value="1"/>
</dbReference>
<dbReference type="NCBIfam" id="NF010595">
    <property type="entry name" value="PRK13989.1"/>
    <property type="match status" value="1"/>
</dbReference>
<dbReference type="Pfam" id="PF03776">
    <property type="entry name" value="MinE"/>
    <property type="match status" value="1"/>
</dbReference>
<dbReference type="SUPFAM" id="SSF55229">
    <property type="entry name" value="Cell division protein MinE topological specificity domain"/>
    <property type="match status" value="1"/>
</dbReference>
<organism>
    <name type="scientific">Herminiimonas arsenicoxydans</name>
    <dbReference type="NCBI Taxonomy" id="204773"/>
    <lineage>
        <taxon>Bacteria</taxon>
        <taxon>Pseudomonadati</taxon>
        <taxon>Pseudomonadota</taxon>
        <taxon>Betaproteobacteria</taxon>
        <taxon>Burkholderiales</taxon>
        <taxon>Oxalobacteraceae</taxon>
        <taxon>Herminiimonas</taxon>
    </lineage>
</organism>
<feature type="chain" id="PRO_0000298129" description="Cell division topological specificity factor">
    <location>
        <begin position="1"/>
        <end position="88"/>
    </location>
</feature>
<protein>
    <recommendedName>
        <fullName evidence="1">Cell division topological specificity factor</fullName>
    </recommendedName>
</protein>
<accession>A4G413</accession>
<name>MINE_HERAR</name>
<comment type="function">
    <text evidence="1">Prevents the cell division inhibition by proteins MinC and MinD at internal division sites while permitting inhibition at polar sites. This ensures cell division at the proper site by restricting the formation of a division septum at the midpoint of the long axis of the cell.</text>
</comment>
<comment type="similarity">
    <text evidence="1">Belongs to the MinE family.</text>
</comment>
<keyword id="KW-0131">Cell cycle</keyword>
<keyword id="KW-0132">Cell division</keyword>
<keyword id="KW-1185">Reference proteome</keyword>
<reference key="1">
    <citation type="journal article" date="2007" name="PLoS Genet.">
        <title>A tale of two oxidation states: bacterial colonization of arsenic-rich environments.</title>
        <authorList>
            <person name="Muller D."/>
            <person name="Medigue C."/>
            <person name="Koechler S."/>
            <person name="Barbe V."/>
            <person name="Barakat M."/>
            <person name="Talla E."/>
            <person name="Bonnefoy V."/>
            <person name="Krin E."/>
            <person name="Arsene-Ploetze F."/>
            <person name="Carapito C."/>
            <person name="Chandler M."/>
            <person name="Cournoyer B."/>
            <person name="Cruveiller S."/>
            <person name="Dossat C."/>
            <person name="Duval S."/>
            <person name="Heymann M."/>
            <person name="Leize E."/>
            <person name="Lieutaud A."/>
            <person name="Lievremont D."/>
            <person name="Makita Y."/>
            <person name="Mangenot S."/>
            <person name="Nitschke W."/>
            <person name="Ortet P."/>
            <person name="Perdrial N."/>
            <person name="Schoepp B."/>
            <person name="Siguier P."/>
            <person name="Simeonova D.D."/>
            <person name="Rouy Z."/>
            <person name="Segurens B."/>
            <person name="Turlin E."/>
            <person name="Vallenet D."/>
            <person name="van Dorsselaer A."/>
            <person name="Weiss S."/>
            <person name="Weissenbach J."/>
            <person name="Lett M.-C."/>
            <person name="Danchin A."/>
            <person name="Bertin P.N."/>
        </authorList>
    </citation>
    <scope>NUCLEOTIDE SEQUENCE [LARGE SCALE GENOMIC DNA]</scope>
    <source>
        <strain>ULPAs1</strain>
    </source>
</reference>
<gene>
    <name evidence="1" type="primary">minE</name>
    <name type="ordered locus">HEAR1071</name>
</gene>
<proteinExistence type="inferred from homology"/>
<evidence type="ECO:0000255" key="1">
    <source>
        <dbReference type="HAMAP-Rule" id="MF_00262"/>
    </source>
</evidence>
<sequence>MALLSFLFNTKPKTANAAKERLQIIIARERNGRTGPDFLPALHKELIAVISKYVKVNPDDIKISLNSQGNLEVLDVNVVLPEDELVKP</sequence>